<name>SRSF6_RABIT</name>
<comment type="function">
    <text evidence="1">Plays a role in constitutive splicing and modulates the selection of alternative splice sites. Plays a role in the alternative splicing of MAPT/Tau exon 10. Binds to alternative exons of TNC pre-mRNA and promotes the expression of alternatively spliced TNC. Plays a role in wound healing and in the regulation of keratinocyte differentiation and proliferation via its role in alternative splicing (By similarity).</text>
</comment>
<comment type="subunit">
    <text evidence="1">Binds SREK1/SFRS12. Interacts with DYRK1A (By similarity).</text>
</comment>
<comment type="subcellular location">
    <subcellularLocation>
        <location evidence="1">Nucleus</location>
    </subcellularLocation>
    <subcellularLocation>
        <location evidence="1">Nucleus speckle</location>
    </subcellularLocation>
</comment>
<comment type="PTM">
    <text evidence="1">Extensively phosphorylated on serine residues in the RS domain. Phosphorylated by DYRK1A, probably in the RS domain. Phosphorylation by DYRK1A modulates alternative splice site selection and inhibits the expression of MAPT/Tau exon 10 (By similarity).</text>
</comment>
<comment type="similarity">
    <text evidence="3">Belongs to the splicing factor SR family.</text>
</comment>
<evidence type="ECO:0000250" key="1"/>
<evidence type="ECO:0000256" key="2">
    <source>
        <dbReference type="SAM" id="MobiDB-lite"/>
    </source>
</evidence>
<evidence type="ECO:0000305" key="3"/>
<keyword id="KW-0507">mRNA processing</keyword>
<keyword id="KW-0508">mRNA splicing</keyword>
<keyword id="KW-0539">Nucleus</keyword>
<keyword id="KW-0597">Phosphoprotein</keyword>
<keyword id="KW-1185">Reference proteome</keyword>
<keyword id="KW-0677">Repeat</keyword>
<keyword id="KW-0678">Repressor</keyword>
<keyword id="KW-0694">RNA-binding</keyword>
<organism>
    <name type="scientific">Oryctolagus cuniculus</name>
    <name type="common">Rabbit</name>
    <dbReference type="NCBI Taxonomy" id="9986"/>
    <lineage>
        <taxon>Eukaryota</taxon>
        <taxon>Metazoa</taxon>
        <taxon>Chordata</taxon>
        <taxon>Craniata</taxon>
        <taxon>Vertebrata</taxon>
        <taxon>Euteleostomi</taxon>
        <taxon>Mammalia</taxon>
        <taxon>Eutheria</taxon>
        <taxon>Euarchontoglires</taxon>
        <taxon>Glires</taxon>
        <taxon>Lagomorpha</taxon>
        <taxon>Leporidae</taxon>
        <taxon>Oryctolagus</taxon>
    </lineage>
</organism>
<accession>O18776</accession>
<reference key="1">
    <citation type="submission" date="1997-07" db="EMBL/GenBank/DDBJ databases">
        <authorList>
            <person name="Brunet A."/>
            <person name="Henrion G."/>
            <person name="Duranthon V."/>
            <person name="Renard J.P."/>
        </authorList>
    </citation>
    <scope>NUCLEOTIDE SEQUENCE [MRNA]</scope>
    <source>
        <strain>New Zealand white</strain>
    </source>
</reference>
<sequence length="81" mass="9521">RSRSRSRRSSRSRSRSISKSRSRSRSRSKGRSRSRSKGRKSRSKSKSKPKSDRGSRSRSRSRSKDEYEKSRSRSRSRSRSP</sequence>
<protein>
    <recommendedName>
        <fullName>Serine/arginine-rich splicing factor 6</fullName>
    </recommendedName>
    <alternativeName>
        <fullName>Pre-mRNA-splicing factor SRP55</fullName>
    </alternativeName>
    <alternativeName>
        <fullName>Splicing factor, arginine/serine-rich 6</fullName>
    </alternativeName>
</protein>
<feature type="chain" id="PRO_0000081931" description="Serine/arginine-rich splicing factor 6">
    <location>
        <begin position="1" status="less than"/>
        <end position="81" status="greater than"/>
    </location>
</feature>
<feature type="region of interest" description="Disordered" evidence="2">
    <location>
        <begin position="1"/>
        <end position="81"/>
    </location>
</feature>
<feature type="compositionally biased region" description="Basic residues" evidence="2">
    <location>
        <begin position="1"/>
        <end position="48"/>
    </location>
</feature>
<feature type="compositionally biased region" description="Basic and acidic residues" evidence="2">
    <location>
        <begin position="62"/>
        <end position="71"/>
    </location>
</feature>
<feature type="compositionally biased region" description="Basic residues" evidence="2">
    <location>
        <begin position="72"/>
        <end position="81"/>
    </location>
</feature>
<feature type="non-terminal residue">
    <location>
        <position position="1"/>
    </location>
</feature>
<feature type="non-terminal residue">
    <location>
        <position position="81"/>
    </location>
</feature>
<proteinExistence type="evidence at transcript level"/>
<dbReference type="EMBL" id="AF011564">
    <property type="protein sequence ID" value="AAB66467.1"/>
    <property type="molecule type" value="mRNA"/>
</dbReference>
<dbReference type="eggNOG" id="KOG0106">
    <property type="taxonomic scope" value="Eukaryota"/>
</dbReference>
<dbReference type="InParanoid" id="O18776"/>
<dbReference type="Proteomes" id="UP000001811">
    <property type="component" value="Unplaced"/>
</dbReference>
<dbReference type="GO" id="GO:0016607">
    <property type="term" value="C:nuclear speck"/>
    <property type="evidence" value="ECO:0000250"/>
    <property type="project" value="UniProtKB"/>
</dbReference>
<dbReference type="GO" id="GO:0036002">
    <property type="term" value="F:pre-mRNA binding"/>
    <property type="evidence" value="ECO:0000250"/>
    <property type="project" value="UniProtKB"/>
</dbReference>
<dbReference type="GO" id="GO:0003723">
    <property type="term" value="F:RNA binding"/>
    <property type="evidence" value="ECO:0000250"/>
    <property type="project" value="UniProtKB"/>
</dbReference>
<dbReference type="GO" id="GO:0000380">
    <property type="term" value="P:alternative mRNA splicing, via spliceosome"/>
    <property type="evidence" value="ECO:0000250"/>
    <property type="project" value="UniProtKB"/>
</dbReference>
<dbReference type="GO" id="GO:0006376">
    <property type="term" value="P:mRNA splice site recognition"/>
    <property type="evidence" value="ECO:0000250"/>
    <property type="project" value="UniProtKB"/>
</dbReference>
<dbReference type="GO" id="GO:0045617">
    <property type="term" value="P:negative regulation of keratinocyte differentiation"/>
    <property type="evidence" value="ECO:0000250"/>
    <property type="project" value="UniProtKB"/>
</dbReference>
<dbReference type="GO" id="GO:0048025">
    <property type="term" value="P:negative regulation of mRNA splicing, via spliceosome"/>
    <property type="evidence" value="ECO:0000250"/>
    <property type="project" value="UniProtKB"/>
</dbReference>
<dbReference type="GO" id="GO:0000381">
    <property type="term" value="P:regulation of alternative mRNA splicing, via spliceosome"/>
    <property type="evidence" value="ECO:0000250"/>
    <property type="project" value="UniProtKB"/>
</dbReference>
<dbReference type="GO" id="GO:0010837">
    <property type="term" value="P:regulation of keratinocyte proliferation"/>
    <property type="evidence" value="ECO:0000250"/>
    <property type="project" value="UniProtKB"/>
</dbReference>
<dbReference type="GO" id="GO:0061041">
    <property type="term" value="P:regulation of wound healing"/>
    <property type="evidence" value="ECO:0000250"/>
    <property type="project" value="UniProtKB"/>
</dbReference>
<gene>
    <name type="primary">SRSF6</name>
    <name type="synonym">SFRS6</name>
    <name type="synonym">SRP55</name>
</gene>